<protein>
    <recommendedName>
        <fullName evidence="1">Ribosomal RNA small subunit methyltransferase G</fullName>
        <ecNumber evidence="1">2.1.1.-</ecNumber>
    </recommendedName>
    <alternativeName>
        <fullName evidence="1">16S rRNA 7-methylguanosine methyltransferase</fullName>
        <shortName evidence="1">16S rRNA m7G methyltransferase</shortName>
    </alternativeName>
</protein>
<organism>
    <name type="scientific">Listeria welshimeri serovar 6b (strain ATCC 35897 / DSM 20650 / CCUG 15529 / CIP 8149 / NCTC 11857 / SLCC 5334 / V8)</name>
    <dbReference type="NCBI Taxonomy" id="386043"/>
    <lineage>
        <taxon>Bacteria</taxon>
        <taxon>Bacillati</taxon>
        <taxon>Bacillota</taxon>
        <taxon>Bacilli</taxon>
        <taxon>Bacillales</taxon>
        <taxon>Listeriaceae</taxon>
        <taxon>Listeria</taxon>
    </lineage>
</organism>
<reference key="1">
    <citation type="journal article" date="2006" name="J. Bacteriol.">
        <title>Whole-genome sequence of Listeria welshimeri reveals common steps in genome reduction with Listeria innocua as compared to Listeria monocytogenes.</title>
        <authorList>
            <person name="Hain T."/>
            <person name="Steinweg C."/>
            <person name="Kuenne C.T."/>
            <person name="Billion A."/>
            <person name="Ghai R."/>
            <person name="Chatterjee S.S."/>
            <person name="Domann E."/>
            <person name="Kaerst U."/>
            <person name="Goesmann A."/>
            <person name="Bekel T."/>
            <person name="Bartels D."/>
            <person name="Kaiser O."/>
            <person name="Meyer F."/>
            <person name="Puehler A."/>
            <person name="Weisshaar B."/>
            <person name="Wehland J."/>
            <person name="Liang C."/>
            <person name="Dandekar T."/>
            <person name="Lampidis R."/>
            <person name="Kreft J."/>
            <person name="Goebel W."/>
            <person name="Chakraborty T."/>
        </authorList>
    </citation>
    <scope>NUCLEOTIDE SEQUENCE [LARGE SCALE GENOMIC DNA]</scope>
    <source>
        <strain>ATCC 35897 / DSM 20650 / CCUG 15529 / CIP 8149 / NCTC 11857 / SLCC 5334 / V8</strain>
    </source>
</reference>
<keyword id="KW-0963">Cytoplasm</keyword>
<keyword id="KW-0489">Methyltransferase</keyword>
<keyword id="KW-0698">rRNA processing</keyword>
<keyword id="KW-0949">S-adenosyl-L-methionine</keyword>
<keyword id="KW-0808">Transferase</keyword>
<sequence length="238" mass="27018">MNPEQFKTALAEKGIELSATQMKQFHDYFEMLVEWNEKMNLTAITDEKEVYLKHFYDSISATFYVDFTSFDSICDVGAGAGFPSIPIKICFPHLKVSIVDSLKKRMTFLDALAEKLGLTDVHFYHDRAETFGQNKAHREKYDLVTARAVARMSVLAELCIPLVKKGGSFLVMKAAQAEQELQIAEKAIKLFGGKVVDHFSFLLPVEESERNIYVINKTKETPNKYPRKPGTPNKLPIE</sequence>
<dbReference type="EC" id="2.1.1.-" evidence="1"/>
<dbReference type="EMBL" id="AM263198">
    <property type="protein sequence ID" value="CAK22157.1"/>
    <property type="molecule type" value="Genomic_DNA"/>
</dbReference>
<dbReference type="RefSeq" id="WP_011703428.1">
    <property type="nucleotide sequence ID" value="NC_008555.1"/>
</dbReference>
<dbReference type="SMR" id="A0AMC5"/>
<dbReference type="STRING" id="386043.lwe2739"/>
<dbReference type="GeneID" id="61190661"/>
<dbReference type="KEGG" id="lwe:lwe2739"/>
<dbReference type="eggNOG" id="COG0357">
    <property type="taxonomic scope" value="Bacteria"/>
</dbReference>
<dbReference type="HOGENOM" id="CLU_065341_0_2_9"/>
<dbReference type="OrthoDB" id="9808773at2"/>
<dbReference type="Proteomes" id="UP000000779">
    <property type="component" value="Chromosome"/>
</dbReference>
<dbReference type="GO" id="GO:0005829">
    <property type="term" value="C:cytosol"/>
    <property type="evidence" value="ECO:0007669"/>
    <property type="project" value="TreeGrafter"/>
</dbReference>
<dbReference type="GO" id="GO:0070043">
    <property type="term" value="F:rRNA (guanine-N7-)-methyltransferase activity"/>
    <property type="evidence" value="ECO:0007669"/>
    <property type="project" value="UniProtKB-UniRule"/>
</dbReference>
<dbReference type="CDD" id="cd02440">
    <property type="entry name" value="AdoMet_MTases"/>
    <property type="match status" value="1"/>
</dbReference>
<dbReference type="FunFam" id="3.40.50.150:FF:000041">
    <property type="entry name" value="Ribosomal RNA small subunit methyltransferase G"/>
    <property type="match status" value="1"/>
</dbReference>
<dbReference type="Gene3D" id="3.40.50.150">
    <property type="entry name" value="Vaccinia Virus protein VP39"/>
    <property type="match status" value="1"/>
</dbReference>
<dbReference type="HAMAP" id="MF_00074">
    <property type="entry name" value="16SrRNA_methyltr_G"/>
    <property type="match status" value="1"/>
</dbReference>
<dbReference type="InterPro" id="IPR003682">
    <property type="entry name" value="rRNA_ssu_MeTfrase_G"/>
</dbReference>
<dbReference type="InterPro" id="IPR029063">
    <property type="entry name" value="SAM-dependent_MTases_sf"/>
</dbReference>
<dbReference type="NCBIfam" id="TIGR00138">
    <property type="entry name" value="rsmG_gidB"/>
    <property type="match status" value="1"/>
</dbReference>
<dbReference type="PANTHER" id="PTHR31760">
    <property type="entry name" value="S-ADENOSYL-L-METHIONINE-DEPENDENT METHYLTRANSFERASES SUPERFAMILY PROTEIN"/>
    <property type="match status" value="1"/>
</dbReference>
<dbReference type="PANTHER" id="PTHR31760:SF0">
    <property type="entry name" value="S-ADENOSYL-L-METHIONINE-DEPENDENT METHYLTRANSFERASES SUPERFAMILY PROTEIN"/>
    <property type="match status" value="1"/>
</dbReference>
<dbReference type="Pfam" id="PF02527">
    <property type="entry name" value="GidB"/>
    <property type="match status" value="1"/>
</dbReference>
<dbReference type="PIRSF" id="PIRSF003078">
    <property type="entry name" value="GidB"/>
    <property type="match status" value="1"/>
</dbReference>
<dbReference type="SUPFAM" id="SSF53335">
    <property type="entry name" value="S-adenosyl-L-methionine-dependent methyltransferases"/>
    <property type="match status" value="1"/>
</dbReference>
<evidence type="ECO:0000255" key="1">
    <source>
        <dbReference type="HAMAP-Rule" id="MF_00074"/>
    </source>
</evidence>
<feature type="chain" id="PRO_1000010167" description="Ribosomal RNA small subunit methyltransferase G">
    <location>
        <begin position="1"/>
        <end position="238"/>
    </location>
</feature>
<feature type="binding site" evidence="1">
    <location>
        <position position="77"/>
    </location>
    <ligand>
        <name>S-adenosyl-L-methionine</name>
        <dbReference type="ChEBI" id="CHEBI:59789"/>
    </ligand>
</feature>
<feature type="binding site" evidence="1">
    <location>
        <position position="82"/>
    </location>
    <ligand>
        <name>S-adenosyl-L-methionine</name>
        <dbReference type="ChEBI" id="CHEBI:59789"/>
    </ligand>
</feature>
<feature type="binding site" evidence="1">
    <location>
        <begin position="128"/>
        <end position="129"/>
    </location>
    <ligand>
        <name>S-adenosyl-L-methionine</name>
        <dbReference type="ChEBI" id="CHEBI:59789"/>
    </ligand>
</feature>
<feature type="binding site" evidence="1">
    <location>
        <position position="147"/>
    </location>
    <ligand>
        <name>S-adenosyl-L-methionine</name>
        <dbReference type="ChEBI" id="CHEBI:59789"/>
    </ligand>
</feature>
<comment type="function">
    <text evidence="1">Specifically methylates the N7 position of guanine in position 535 of 16S rRNA.</text>
</comment>
<comment type="subcellular location">
    <subcellularLocation>
        <location evidence="1">Cytoplasm</location>
    </subcellularLocation>
</comment>
<comment type="similarity">
    <text evidence="1">Belongs to the methyltransferase superfamily. RNA methyltransferase RsmG family.</text>
</comment>
<name>RSMG_LISW6</name>
<accession>A0AMC5</accession>
<gene>
    <name evidence="1" type="primary">rsmG</name>
    <name type="ordered locus">lwe2739</name>
</gene>
<proteinExistence type="inferred from homology"/>